<evidence type="ECO:0000250" key="1">
    <source>
        <dbReference type="UniProtKB" id="E2R4X3"/>
    </source>
</evidence>
<evidence type="ECO:0000250" key="2">
    <source>
        <dbReference type="UniProtKB" id="P61803"/>
    </source>
</evidence>
<evidence type="ECO:0000255" key="3"/>
<evidence type="ECO:0000305" key="4"/>
<name>DAD1_PONAB</name>
<dbReference type="EMBL" id="CR858737">
    <property type="protein sequence ID" value="CAH90946.1"/>
    <property type="molecule type" value="mRNA"/>
</dbReference>
<dbReference type="RefSeq" id="NP_001125543.1">
    <property type="nucleotide sequence ID" value="NM_001132071.1"/>
</dbReference>
<dbReference type="SMR" id="Q5RBB4"/>
<dbReference type="STRING" id="9601.ENSPPYP00000006408"/>
<dbReference type="GeneID" id="100172455"/>
<dbReference type="KEGG" id="pon:100172455"/>
<dbReference type="CTD" id="1603"/>
<dbReference type="eggNOG" id="KOG1746">
    <property type="taxonomic scope" value="Eukaryota"/>
</dbReference>
<dbReference type="InParanoid" id="Q5RBB4"/>
<dbReference type="OrthoDB" id="445566at2759"/>
<dbReference type="UniPathway" id="UPA00378"/>
<dbReference type="Proteomes" id="UP000001595">
    <property type="component" value="Unplaced"/>
</dbReference>
<dbReference type="GO" id="GO:0008250">
    <property type="term" value="C:oligosaccharyltransferase complex"/>
    <property type="evidence" value="ECO:0000250"/>
    <property type="project" value="UniProtKB"/>
</dbReference>
<dbReference type="GO" id="GO:0006915">
    <property type="term" value="P:apoptotic process"/>
    <property type="evidence" value="ECO:0007669"/>
    <property type="project" value="UniProtKB-KW"/>
</dbReference>
<dbReference type="GO" id="GO:0006486">
    <property type="term" value="P:protein glycosylation"/>
    <property type="evidence" value="ECO:0000250"/>
    <property type="project" value="UniProtKB"/>
</dbReference>
<dbReference type="GO" id="GO:0006487">
    <property type="term" value="P:protein N-linked glycosylation"/>
    <property type="evidence" value="ECO:0007669"/>
    <property type="project" value="TreeGrafter"/>
</dbReference>
<dbReference type="InterPro" id="IPR003038">
    <property type="entry name" value="DAD/Ost2"/>
</dbReference>
<dbReference type="PANTHER" id="PTHR10705">
    <property type="entry name" value="DOLICHYL-DIPHOSPHOOLIGOSACCHARIDE--PROTEIN GLYCOSYLTRANSFERASE SUBUNIT DAD1"/>
    <property type="match status" value="1"/>
</dbReference>
<dbReference type="PANTHER" id="PTHR10705:SF0">
    <property type="entry name" value="DOLICHYL-DIPHOSPHOOLIGOSACCHARIDE--PROTEIN GLYCOSYLTRANSFERASE SUBUNIT DAD1"/>
    <property type="match status" value="1"/>
</dbReference>
<dbReference type="Pfam" id="PF02109">
    <property type="entry name" value="DAD"/>
    <property type="match status" value="1"/>
</dbReference>
<dbReference type="PIRSF" id="PIRSF005588">
    <property type="entry name" value="DAD"/>
    <property type="match status" value="1"/>
</dbReference>
<comment type="function">
    <text evidence="1">Subunit of the oligosaccharyl transferase (OST) complex that catalyzes the initial transfer of a defined glycan (Glc(3)Man(9)GlcNAc(2) in eukaryotes) from the lipid carrier dolichol-pyrophosphate to an asparagine residue within an Asn-X-Ser/Thr consensus motif in nascent polypeptide chains, the first step in protein N-glycosylation. N-glycosylation occurs cotranslationally and the complex associates with the Sec61 complex at the channel-forming translocon complex that mediates protein translocation across the endoplasmic reticulum (ER). All subunits are required for a maximal enzyme activity.</text>
</comment>
<comment type="pathway">
    <text evidence="2">Protein modification; protein glycosylation.</text>
</comment>
<comment type="subunit">
    <text evidence="1">Component of the oligosaccharyltransferase (OST) complex. OST exists in two different complex forms which contain common core subunits RPN1, RPN2, OST48, OST4, DAD1 and TMEM258, either STT3A or STT3B as catalytic subunits, and form-specific accessory subunits. STT3A complex assembly occurs through the formation of 3 subcomplexes. Subcomplex 1 contains RPN1 and TMEM258, subcomplex 2 contains the STT3A-specific subunits STT3A, DC2/OSTC, and KCP2 as well as the core subunit OST4, and subcomplex 3 contains RPN2, DAD1, and OST48. The STT3A complex can form stable complexes with the Sec61 complex or with both the Sec61 and TRAP complexes.</text>
</comment>
<comment type="subcellular location">
    <subcellularLocation>
        <location>Endoplasmic reticulum membrane</location>
        <topology evidence="4">Multi-pass membrane protein</topology>
    </subcellularLocation>
</comment>
<comment type="similarity">
    <text evidence="4">Belongs to the DAD/OST2 family.</text>
</comment>
<sequence length="113" mass="12550">MSASVVSVISRFLEEYLSSTPQRLKLLDAYLLYILLTGALQFGYCLLVGTFPFNSFLSGFISCVGSFILAVRLRIQINPQNKADFQGISPERAFADFLFASTILHLVVMNFVG</sequence>
<accession>Q5RBB4</accession>
<organism>
    <name type="scientific">Pongo abelii</name>
    <name type="common">Sumatran orangutan</name>
    <name type="synonym">Pongo pygmaeus abelii</name>
    <dbReference type="NCBI Taxonomy" id="9601"/>
    <lineage>
        <taxon>Eukaryota</taxon>
        <taxon>Metazoa</taxon>
        <taxon>Chordata</taxon>
        <taxon>Craniata</taxon>
        <taxon>Vertebrata</taxon>
        <taxon>Euteleostomi</taxon>
        <taxon>Mammalia</taxon>
        <taxon>Eutheria</taxon>
        <taxon>Euarchontoglires</taxon>
        <taxon>Primates</taxon>
        <taxon>Haplorrhini</taxon>
        <taxon>Catarrhini</taxon>
        <taxon>Hominidae</taxon>
        <taxon>Pongo</taxon>
    </lineage>
</organism>
<gene>
    <name evidence="2" type="primary">DAD1</name>
</gene>
<reference key="1">
    <citation type="submission" date="2004-11" db="EMBL/GenBank/DDBJ databases">
        <authorList>
            <consortium name="The German cDNA consortium"/>
        </authorList>
    </citation>
    <scope>NUCLEOTIDE SEQUENCE [LARGE SCALE MRNA]</scope>
    <source>
        <tissue>Kidney</tissue>
    </source>
</reference>
<keyword id="KW-0007">Acetylation</keyword>
<keyword id="KW-0053">Apoptosis</keyword>
<keyword id="KW-0256">Endoplasmic reticulum</keyword>
<keyword id="KW-0472">Membrane</keyword>
<keyword id="KW-1185">Reference proteome</keyword>
<keyword id="KW-0812">Transmembrane</keyword>
<keyword id="KW-1133">Transmembrane helix</keyword>
<feature type="initiator methionine" description="Removed" evidence="2">
    <location>
        <position position="1"/>
    </location>
</feature>
<feature type="chain" id="PRO_0000124013" description="Dolichyl-diphosphooligosaccharide--protein glycosyltransferase subunit DAD1">
    <location>
        <begin position="2"/>
        <end position="113"/>
    </location>
</feature>
<feature type="topological domain" description="Cytoplasmic" evidence="3">
    <location>
        <begin position="2"/>
        <end position="30"/>
    </location>
</feature>
<feature type="transmembrane region" description="Helical" evidence="3">
    <location>
        <begin position="31"/>
        <end position="51"/>
    </location>
</feature>
<feature type="topological domain" description="Lumenal" evidence="3">
    <location>
        <position position="52"/>
    </location>
</feature>
<feature type="transmembrane region" description="Helical" evidence="3">
    <location>
        <begin position="53"/>
        <end position="73"/>
    </location>
</feature>
<feature type="topological domain" description="Cytoplasmic" evidence="3">
    <location>
        <begin position="74"/>
        <end position="92"/>
    </location>
</feature>
<feature type="transmembrane region" description="Helical" evidence="3">
    <location>
        <begin position="93"/>
        <end position="113"/>
    </location>
</feature>
<feature type="modified residue" description="N-acetylserine" evidence="2">
    <location>
        <position position="2"/>
    </location>
</feature>
<proteinExistence type="inferred from homology"/>
<protein>
    <recommendedName>
        <fullName evidence="2">Dolichyl-diphosphooligosaccharide--protein glycosyltransferase subunit DAD1</fullName>
        <shortName>Oligosaccharyl transferase subunit DAD1</shortName>
    </recommendedName>
    <alternativeName>
        <fullName>Defender against cell death 1</fullName>
        <shortName>DAD-1</shortName>
    </alternativeName>
</protein>